<proteinExistence type="inferred from homology"/>
<comment type="function">
    <text evidence="1">Catalyzes the oxidation of 5,10-methylenetetrahydrofolate to 5,10-methenyltetrahydrofolate and then the hydrolysis of 5,10-methenyltetrahydrofolate to 10-formyltetrahydrofolate.</text>
</comment>
<comment type="catalytic activity">
    <reaction evidence="1">
        <text>(6R)-5,10-methylene-5,6,7,8-tetrahydrofolate + NADP(+) = (6R)-5,10-methenyltetrahydrofolate + NADPH</text>
        <dbReference type="Rhea" id="RHEA:22812"/>
        <dbReference type="ChEBI" id="CHEBI:15636"/>
        <dbReference type="ChEBI" id="CHEBI:57455"/>
        <dbReference type="ChEBI" id="CHEBI:57783"/>
        <dbReference type="ChEBI" id="CHEBI:58349"/>
        <dbReference type="EC" id="1.5.1.5"/>
    </reaction>
</comment>
<comment type="catalytic activity">
    <reaction evidence="1">
        <text>(6R)-5,10-methenyltetrahydrofolate + H2O = (6R)-10-formyltetrahydrofolate + H(+)</text>
        <dbReference type="Rhea" id="RHEA:23700"/>
        <dbReference type="ChEBI" id="CHEBI:15377"/>
        <dbReference type="ChEBI" id="CHEBI:15378"/>
        <dbReference type="ChEBI" id="CHEBI:57455"/>
        <dbReference type="ChEBI" id="CHEBI:195366"/>
        <dbReference type="EC" id="3.5.4.9"/>
    </reaction>
</comment>
<comment type="pathway">
    <text evidence="1">One-carbon metabolism; tetrahydrofolate interconversion.</text>
</comment>
<comment type="subunit">
    <text evidence="1">Homodimer.</text>
</comment>
<comment type="similarity">
    <text evidence="1">Belongs to the tetrahydrofolate dehydrogenase/cyclohydrolase family.</text>
</comment>
<evidence type="ECO:0000255" key="1">
    <source>
        <dbReference type="HAMAP-Rule" id="MF_01576"/>
    </source>
</evidence>
<organism>
    <name type="scientific">Pseudothermotoga lettingae (strain ATCC BAA-301 / DSM 14385 / NBRC 107922 / TMO)</name>
    <name type="common">Thermotoga lettingae</name>
    <dbReference type="NCBI Taxonomy" id="416591"/>
    <lineage>
        <taxon>Bacteria</taxon>
        <taxon>Thermotogati</taxon>
        <taxon>Thermotogota</taxon>
        <taxon>Thermotogae</taxon>
        <taxon>Thermotogales</taxon>
        <taxon>Thermotogaceae</taxon>
        <taxon>Pseudothermotoga</taxon>
    </lineage>
</organism>
<sequence>MIIDCRSISKEIDEETLKLLTICKTKPKLVSFTINPDSGTISYLKSQQKKARSLGIEYETRVLDSVDDLKSDILNASKDSSVHGIFVSHPLPAGINEMEIAKLVDPEKDIEGRNPLNMGYLIYGKEDFAPCTATAVVRILTSVTSVTGKQVVIIGRSTTVGQPAAIMLLRRDRSATVTVCHSKTRDIPSITKKADIIIVAVGKAGFLKKDMVKEEAVVIDVGINILDGKIAGDVEQSVQEIAYLTPVPGGVGLVTTSVLMNRVAKNASRGDSN</sequence>
<gene>
    <name evidence="1" type="primary">folD</name>
    <name type="ordered locus">Tlet_1514</name>
</gene>
<name>FOLD_PSELT</name>
<feature type="chain" id="PRO_0000318792" description="Bifunctional protein FolD">
    <location>
        <begin position="1"/>
        <end position="273"/>
    </location>
</feature>
<feature type="binding site" evidence="1">
    <location>
        <begin position="155"/>
        <end position="157"/>
    </location>
    <ligand>
        <name>NADP(+)</name>
        <dbReference type="ChEBI" id="CHEBI:58349"/>
    </ligand>
</feature>
<feature type="binding site" evidence="1">
    <location>
        <position position="182"/>
    </location>
    <ligand>
        <name>NADP(+)</name>
        <dbReference type="ChEBI" id="CHEBI:58349"/>
    </ligand>
</feature>
<feature type="binding site" evidence="1">
    <location>
        <position position="223"/>
    </location>
    <ligand>
        <name>NADP(+)</name>
        <dbReference type="ChEBI" id="CHEBI:58349"/>
    </ligand>
</feature>
<reference key="1">
    <citation type="submission" date="2007-08" db="EMBL/GenBank/DDBJ databases">
        <title>Complete sequence of Thermotoga lettingae TMO.</title>
        <authorList>
            <consortium name="US DOE Joint Genome Institute"/>
            <person name="Copeland A."/>
            <person name="Lucas S."/>
            <person name="Lapidus A."/>
            <person name="Barry K."/>
            <person name="Glavina del Rio T."/>
            <person name="Dalin E."/>
            <person name="Tice H."/>
            <person name="Pitluck S."/>
            <person name="Foster B."/>
            <person name="Bruce D."/>
            <person name="Schmutz J."/>
            <person name="Larimer F."/>
            <person name="Land M."/>
            <person name="Hauser L."/>
            <person name="Kyrpides N."/>
            <person name="Mikhailova N."/>
            <person name="Nelson K."/>
            <person name="Gogarten J.P."/>
            <person name="Noll K."/>
            <person name="Richardson P."/>
        </authorList>
    </citation>
    <scope>NUCLEOTIDE SEQUENCE [LARGE SCALE GENOMIC DNA]</scope>
    <source>
        <strain>ATCC BAA-301 / DSM 14385 / NBRC 107922 / TMO</strain>
    </source>
</reference>
<accession>A8F7D6</accession>
<dbReference type="EC" id="1.5.1.5" evidence="1"/>
<dbReference type="EC" id="3.5.4.9" evidence="1"/>
<dbReference type="EMBL" id="CP000812">
    <property type="protein sequence ID" value="ABV34070.1"/>
    <property type="molecule type" value="Genomic_DNA"/>
</dbReference>
<dbReference type="RefSeq" id="WP_012003546.1">
    <property type="nucleotide sequence ID" value="NZ_BSDV01000001.1"/>
</dbReference>
<dbReference type="SMR" id="A8F7D6"/>
<dbReference type="STRING" id="416591.Tlet_1514"/>
<dbReference type="KEGG" id="tle:Tlet_1514"/>
<dbReference type="eggNOG" id="COG0190">
    <property type="taxonomic scope" value="Bacteria"/>
</dbReference>
<dbReference type="HOGENOM" id="CLU_034045_2_1_0"/>
<dbReference type="OrthoDB" id="9803580at2"/>
<dbReference type="UniPathway" id="UPA00193"/>
<dbReference type="Proteomes" id="UP000002016">
    <property type="component" value="Chromosome"/>
</dbReference>
<dbReference type="GO" id="GO:0005829">
    <property type="term" value="C:cytosol"/>
    <property type="evidence" value="ECO:0007669"/>
    <property type="project" value="TreeGrafter"/>
</dbReference>
<dbReference type="GO" id="GO:0004477">
    <property type="term" value="F:methenyltetrahydrofolate cyclohydrolase activity"/>
    <property type="evidence" value="ECO:0007669"/>
    <property type="project" value="UniProtKB-UniRule"/>
</dbReference>
<dbReference type="GO" id="GO:0004488">
    <property type="term" value="F:methylenetetrahydrofolate dehydrogenase (NADP+) activity"/>
    <property type="evidence" value="ECO:0007669"/>
    <property type="project" value="UniProtKB-UniRule"/>
</dbReference>
<dbReference type="GO" id="GO:0000105">
    <property type="term" value="P:L-histidine biosynthetic process"/>
    <property type="evidence" value="ECO:0007669"/>
    <property type="project" value="UniProtKB-KW"/>
</dbReference>
<dbReference type="GO" id="GO:0009086">
    <property type="term" value="P:methionine biosynthetic process"/>
    <property type="evidence" value="ECO:0007669"/>
    <property type="project" value="UniProtKB-KW"/>
</dbReference>
<dbReference type="GO" id="GO:0006164">
    <property type="term" value="P:purine nucleotide biosynthetic process"/>
    <property type="evidence" value="ECO:0007669"/>
    <property type="project" value="UniProtKB-KW"/>
</dbReference>
<dbReference type="GO" id="GO:0035999">
    <property type="term" value="P:tetrahydrofolate interconversion"/>
    <property type="evidence" value="ECO:0007669"/>
    <property type="project" value="UniProtKB-UniRule"/>
</dbReference>
<dbReference type="CDD" id="cd01080">
    <property type="entry name" value="NAD_bind_m-THF_DH_Cyclohyd"/>
    <property type="match status" value="1"/>
</dbReference>
<dbReference type="Gene3D" id="3.40.50.10860">
    <property type="entry name" value="Leucine Dehydrogenase, chain A, domain 1"/>
    <property type="match status" value="1"/>
</dbReference>
<dbReference type="Gene3D" id="3.40.50.720">
    <property type="entry name" value="NAD(P)-binding Rossmann-like Domain"/>
    <property type="match status" value="1"/>
</dbReference>
<dbReference type="HAMAP" id="MF_01576">
    <property type="entry name" value="THF_DHG_CYH"/>
    <property type="match status" value="1"/>
</dbReference>
<dbReference type="InterPro" id="IPR046346">
    <property type="entry name" value="Aminoacid_DH-like_N_sf"/>
</dbReference>
<dbReference type="InterPro" id="IPR036291">
    <property type="entry name" value="NAD(P)-bd_dom_sf"/>
</dbReference>
<dbReference type="InterPro" id="IPR000672">
    <property type="entry name" value="THF_DH/CycHdrlase"/>
</dbReference>
<dbReference type="InterPro" id="IPR020630">
    <property type="entry name" value="THF_DH/CycHdrlase_cat_dom"/>
</dbReference>
<dbReference type="InterPro" id="IPR020631">
    <property type="entry name" value="THF_DH/CycHdrlase_NAD-bd_dom"/>
</dbReference>
<dbReference type="PANTHER" id="PTHR48099:SF5">
    <property type="entry name" value="C-1-TETRAHYDROFOLATE SYNTHASE, CYTOPLASMIC"/>
    <property type="match status" value="1"/>
</dbReference>
<dbReference type="PANTHER" id="PTHR48099">
    <property type="entry name" value="C-1-TETRAHYDROFOLATE SYNTHASE, CYTOPLASMIC-RELATED"/>
    <property type="match status" value="1"/>
</dbReference>
<dbReference type="Pfam" id="PF00763">
    <property type="entry name" value="THF_DHG_CYH"/>
    <property type="match status" value="1"/>
</dbReference>
<dbReference type="Pfam" id="PF02882">
    <property type="entry name" value="THF_DHG_CYH_C"/>
    <property type="match status" value="1"/>
</dbReference>
<dbReference type="PRINTS" id="PR00085">
    <property type="entry name" value="THFDHDRGNASE"/>
</dbReference>
<dbReference type="SUPFAM" id="SSF53223">
    <property type="entry name" value="Aminoacid dehydrogenase-like, N-terminal domain"/>
    <property type="match status" value="1"/>
</dbReference>
<dbReference type="SUPFAM" id="SSF51735">
    <property type="entry name" value="NAD(P)-binding Rossmann-fold domains"/>
    <property type="match status" value="1"/>
</dbReference>
<protein>
    <recommendedName>
        <fullName evidence="1">Bifunctional protein FolD</fullName>
    </recommendedName>
    <domain>
        <recommendedName>
            <fullName evidence="1">Methylenetetrahydrofolate dehydrogenase</fullName>
            <ecNumber evidence="1">1.5.1.5</ecNumber>
        </recommendedName>
    </domain>
    <domain>
        <recommendedName>
            <fullName evidence="1">Methenyltetrahydrofolate cyclohydrolase</fullName>
            <ecNumber evidence="1">3.5.4.9</ecNumber>
        </recommendedName>
    </domain>
</protein>
<keyword id="KW-0028">Amino-acid biosynthesis</keyword>
<keyword id="KW-0368">Histidine biosynthesis</keyword>
<keyword id="KW-0378">Hydrolase</keyword>
<keyword id="KW-0486">Methionine biosynthesis</keyword>
<keyword id="KW-0511">Multifunctional enzyme</keyword>
<keyword id="KW-0521">NADP</keyword>
<keyword id="KW-0554">One-carbon metabolism</keyword>
<keyword id="KW-0560">Oxidoreductase</keyword>
<keyword id="KW-0658">Purine biosynthesis</keyword>
<keyword id="KW-1185">Reference proteome</keyword>